<keyword id="KW-0028">Amino-acid biosynthesis</keyword>
<keyword id="KW-0055">Arginine biosynthesis</keyword>
<keyword id="KW-0067">ATP-binding</keyword>
<keyword id="KW-0963">Cytoplasm</keyword>
<keyword id="KW-0418">Kinase</keyword>
<keyword id="KW-0547">Nucleotide-binding</keyword>
<keyword id="KW-0808">Transferase</keyword>
<accession>A3CRT9</accession>
<protein>
    <recommendedName>
        <fullName evidence="1">Acetylglutamate kinase</fullName>
        <ecNumber evidence="1">2.7.2.8</ecNumber>
    </recommendedName>
    <alternativeName>
        <fullName evidence="1">N-acetyl-L-glutamate 5-phosphotransferase</fullName>
    </alternativeName>
    <alternativeName>
        <fullName evidence="1">NAG kinase</fullName>
        <shortName evidence="1">NAGK</shortName>
    </alternativeName>
</protein>
<reference key="1">
    <citation type="journal article" date="2009" name="Stand. Genomic Sci.">
        <title>Complete genome sequence of Methanoculleus marisnigri Romesser et al. 1981 type strain JR1.</title>
        <authorList>
            <person name="Anderson I.J."/>
            <person name="Sieprawska-Lupa M."/>
            <person name="Lapidus A."/>
            <person name="Nolan M."/>
            <person name="Copeland A."/>
            <person name="Glavina Del Rio T."/>
            <person name="Tice H."/>
            <person name="Dalin E."/>
            <person name="Barry K."/>
            <person name="Saunders E."/>
            <person name="Han C."/>
            <person name="Brettin T."/>
            <person name="Detter J.C."/>
            <person name="Bruce D."/>
            <person name="Mikhailova N."/>
            <person name="Pitluck S."/>
            <person name="Hauser L."/>
            <person name="Land M."/>
            <person name="Lucas S."/>
            <person name="Richardson P."/>
            <person name="Whitman W.B."/>
            <person name="Kyrpides N.C."/>
        </authorList>
    </citation>
    <scope>NUCLEOTIDE SEQUENCE [LARGE SCALE GENOMIC DNA]</scope>
    <source>
        <strain>ATCC 35101 / DSM 1498 / JR1</strain>
    </source>
</reference>
<comment type="function">
    <text evidence="1">Catalyzes the ATP-dependent phosphorylation of N-acetyl-L-glutamate.</text>
</comment>
<comment type="catalytic activity">
    <reaction evidence="1">
        <text>N-acetyl-L-glutamate + ATP = N-acetyl-L-glutamyl 5-phosphate + ADP</text>
        <dbReference type="Rhea" id="RHEA:14629"/>
        <dbReference type="ChEBI" id="CHEBI:30616"/>
        <dbReference type="ChEBI" id="CHEBI:44337"/>
        <dbReference type="ChEBI" id="CHEBI:57936"/>
        <dbReference type="ChEBI" id="CHEBI:456216"/>
        <dbReference type="EC" id="2.7.2.8"/>
    </reaction>
</comment>
<comment type="pathway">
    <text evidence="1">Amino-acid biosynthesis; L-arginine biosynthesis; N(2)-acetyl-L-ornithine from L-glutamate: step 2/4.</text>
</comment>
<comment type="subcellular location">
    <subcellularLocation>
        <location evidence="1">Cytoplasm</location>
    </subcellularLocation>
</comment>
<comment type="similarity">
    <text evidence="1">Belongs to the acetylglutamate kinase family. ArgB subfamily.</text>
</comment>
<name>ARGB_METMJ</name>
<sequence length="289" mass="30949">MKREDVLMEALPYIQKFYGKTIVIKLGGHAMVDQSILETVIRDAVLLRYVGMKVVLVHGGGPEITAKMQAMGKEPKFVGGLRITDPETLEIAQMVLVGKINDGIVSLIANCGTRAVGISGNDGNLLIARKMDPQRVQVGEVMQEVDLGQVGEIEEVDPEVLHCLLAQNYIPVVAPIAIDRQGMSLNINADTAAAEIAIALSAFKLVNLTDVDGVMDADRTMVYHRLALTEAEAMIGAGVIAGGMIPKLEGCMKAVRNGVASAHVVNGNREHNLLLELFTDQGVGTMLTL</sequence>
<feature type="chain" id="PRO_1000010509" description="Acetylglutamate kinase">
    <location>
        <begin position="1"/>
        <end position="289"/>
    </location>
</feature>
<feature type="binding site" evidence="1">
    <location>
        <begin position="60"/>
        <end position="61"/>
    </location>
    <ligand>
        <name>substrate</name>
    </ligand>
</feature>
<feature type="binding site" evidence="1">
    <location>
        <position position="82"/>
    </location>
    <ligand>
        <name>substrate</name>
    </ligand>
</feature>
<feature type="binding site" evidence="1">
    <location>
        <position position="186"/>
    </location>
    <ligand>
        <name>substrate</name>
    </ligand>
</feature>
<feature type="site" description="Transition state stabilizer" evidence="1">
    <location>
        <position position="25"/>
    </location>
</feature>
<feature type="site" description="Transition state stabilizer" evidence="1">
    <location>
        <position position="247"/>
    </location>
</feature>
<gene>
    <name evidence="1" type="primary">argB</name>
    <name type="ordered locus">Memar_0154</name>
</gene>
<evidence type="ECO:0000255" key="1">
    <source>
        <dbReference type="HAMAP-Rule" id="MF_00082"/>
    </source>
</evidence>
<proteinExistence type="inferred from homology"/>
<dbReference type="EC" id="2.7.2.8" evidence="1"/>
<dbReference type="EMBL" id="CP000562">
    <property type="protein sequence ID" value="ABN56089.1"/>
    <property type="molecule type" value="Genomic_DNA"/>
</dbReference>
<dbReference type="RefSeq" id="WP_011843010.1">
    <property type="nucleotide sequence ID" value="NC_009051.1"/>
</dbReference>
<dbReference type="SMR" id="A3CRT9"/>
<dbReference type="STRING" id="368407.Memar_0154"/>
<dbReference type="GeneID" id="4848336"/>
<dbReference type="GeneID" id="76730736"/>
<dbReference type="KEGG" id="mem:Memar_0154"/>
<dbReference type="eggNOG" id="arCOG00862">
    <property type="taxonomic scope" value="Archaea"/>
</dbReference>
<dbReference type="HOGENOM" id="CLU_053680_0_0_2"/>
<dbReference type="OrthoDB" id="6816at2157"/>
<dbReference type="UniPathway" id="UPA00068">
    <property type="reaction ID" value="UER00107"/>
</dbReference>
<dbReference type="Proteomes" id="UP000002146">
    <property type="component" value="Chromosome"/>
</dbReference>
<dbReference type="GO" id="GO:0005737">
    <property type="term" value="C:cytoplasm"/>
    <property type="evidence" value="ECO:0007669"/>
    <property type="project" value="UniProtKB-SubCell"/>
</dbReference>
<dbReference type="GO" id="GO:0003991">
    <property type="term" value="F:acetylglutamate kinase activity"/>
    <property type="evidence" value="ECO:0007669"/>
    <property type="project" value="UniProtKB-UniRule"/>
</dbReference>
<dbReference type="GO" id="GO:0005524">
    <property type="term" value="F:ATP binding"/>
    <property type="evidence" value="ECO:0007669"/>
    <property type="project" value="UniProtKB-UniRule"/>
</dbReference>
<dbReference type="GO" id="GO:0042450">
    <property type="term" value="P:arginine biosynthetic process via ornithine"/>
    <property type="evidence" value="ECO:0007669"/>
    <property type="project" value="UniProtKB-UniRule"/>
</dbReference>
<dbReference type="GO" id="GO:0006526">
    <property type="term" value="P:L-arginine biosynthetic process"/>
    <property type="evidence" value="ECO:0007669"/>
    <property type="project" value="UniProtKB-UniPathway"/>
</dbReference>
<dbReference type="CDD" id="cd04250">
    <property type="entry name" value="AAK_NAGK-C"/>
    <property type="match status" value="1"/>
</dbReference>
<dbReference type="FunFam" id="3.40.1160.10:FF:000004">
    <property type="entry name" value="Acetylglutamate kinase"/>
    <property type="match status" value="1"/>
</dbReference>
<dbReference type="Gene3D" id="3.40.1160.10">
    <property type="entry name" value="Acetylglutamate kinase-like"/>
    <property type="match status" value="1"/>
</dbReference>
<dbReference type="HAMAP" id="MF_00082">
    <property type="entry name" value="ArgB"/>
    <property type="match status" value="1"/>
</dbReference>
<dbReference type="InterPro" id="IPR036393">
    <property type="entry name" value="AceGlu_kinase-like_sf"/>
</dbReference>
<dbReference type="InterPro" id="IPR004662">
    <property type="entry name" value="AcgluKinase_fam"/>
</dbReference>
<dbReference type="InterPro" id="IPR037528">
    <property type="entry name" value="ArgB"/>
</dbReference>
<dbReference type="InterPro" id="IPR001048">
    <property type="entry name" value="Asp/Glu/Uridylate_kinase"/>
</dbReference>
<dbReference type="InterPro" id="IPR001057">
    <property type="entry name" value="Glu/AcGlu_kinase"/>
</dbReference>
<dbReference type="InterPro" id="IPR041727">
    <property type="entry name" value="NAGK-C"/>
</dbReference>
<dbReference type="NCBIfam" id="TIGR00761">
    <property type="entry name" value="argB"/>
    <property type="match status" value="1"/>
</dbReference>
<dbReference type="PANTHER" id="PTHR23342">
    <property type="entry name" value="N-ACETYLGLUTAMATE SYNTHASE"/>
    <property type="match status" value="1"/>
</dbReference>
<dbReference type="PANTHER" id="PTHR23342:SF0">
    <property type="entry name" value="N-ACETYLGLUTAMATE SYNTHASE, MITOCHONDRIAL"/>
    <property type="match status" value="1"/>
</dbReference>
<dbReference type="Pfam" id="PF00696">
    <property type="entry name" value="AA_kinase"/>
    <property type="match status" value="1"/>
</dbReference>
<dbReference type="PIRSF" id="PIRSF000728">
    <property type="entry name" value="NAGK"/>
    <property type="match status" value="1"/>
</dbReference>
<dbReference type="PRINTS" id="PR00474">
    <property type="entry name" value="GLU5KINASE"/>
</dbReference>
<dbReference type="SUPFAM" id="SSF53633">
    <property type="entry name" value="Carbamate kinase-like"/>
    <property type="match status" value="1"/>
</dbReference>
<organism>
    <name type="scientific">Methanoculleus marisnigri (strain ATCC 35101 / DSM 1498 / JR1)</name>
    <dbReference type="NCBI Taxonomy" id="368407"/>
    <lineage>
        <taxon>Archaea</taxon>
        <taxon>Methanobacteriati</taxon>
        <taxon>Methanobacteriota</taxon>
        <taxon>Stenosarchaea group</taxon>
        <taxon>Methanomicrobia</taxon>
        <taxon>Methanomicrobiales</taxon>
        <taxon>Methanomicrobiaceae</taxon>
        <taxon>Methanoculleus</taxon>
    </lineage>
</organism>